<dbReference type="EC" id="2.7.7.-" evidence="4"/>
<dbReference type="EMBL" id="CP001956">
    <property type="protein sequence ID" value="ADE04813.1"/>
    <property type="molecule type" value="Genomic_DNA"/>
</dbReference>
<dbReference type="EMBL" id="AOHU01000098">
    <property type="protein sequence ID" value="ELY26159.1"/>
    <property type="molecule type" value="Genomic_DNA"/>
</dbReference>
<dbReference type="RefSeq" id="WP_004044353.1">
    <property type="nucleotide sequence ID" value="NC_013967.1"/>
</dbReference>
<dbReference type="SMR" id="D4GSH6"/>
<dbReference type="STRING" id="309800.HVO_0580"/>
<dbReference type="PaxDb" id="309800-C498_15825"/>
<dbReference type="EnsemblBacteria" id="ADE04813">
    <property type="protein sequence ID" value="ADE04813"/>
    <property type="gene ID" value="HVO_0580"/>
</dbReference>
<dbReference type="GeneID" id="8925285"/>
<dbReference type="KEGG" id="hvo:HVO_0580"/>
<dbReference type="PATRIC" id="fig|309800.29.peg.3060"/>
<dbReference type="eggNOG" id="arCOG00042">
    <property type="taxonomic scope" value="Archaea"/>
</dbReference>
<dbReference type="HOGENOM" id="CLU_026481_1_1_2"/>
<dbReference type="OrthoDB" id="33422at2157"/>
<dbReference type="BioCyc" id="MetaCyc:MONOMER-20244"/>
<dbReference type="UniPathway" id="UPA00988"/>
<dbReference type="Proteomes" id="UP000008243">
    <property type="component" value="Chromosome"/>
</dbReference>
<dbReference type="Proteomes" id="UP000011532">
    <property type="component" value="Unassembled WGS sequence"/>
</dbReference>
<dbReference type="GO" id="GO:0002144">
    <property type="term" value="C:cytosolic tRNA wobble base thiouridylase complex"/>
    <property type="evidence" value="ECO:0007669"/>
    <property type="project" value="TreeGrafter"/>
</dbReference>
<dbReference type="GO" id="GO:0004810">
    <property type="term" value="F:CCA tRNA nucleotidyltransferase activity"/>
    <property type="evidence" value="ECO:0000315"/>
    <property type="project" value="UniProtKB"/>
</dbReference>
<dbReference type="GO" id="GO:0019899">
    <property type="term" value="F:enzyme binding"/>
    <property type="evidence" value="ECO:0000353"/>
    <property type="project" value="UniProtKB"/>
</dbReference>
<dbReference type="GO" id="GO:0016783">
    <property type="term" value="F:sulfurtransferase activity"/>
    <property type="evidence" value="ECO:0000315"/>
    <property type="project" value="UniProtKB"/>
</dbReference>
<dbReference type="GO" id="GO:0000049">
    <property type="term" value="F:tRNA binding"/>
    <property type="evidence" value="ECO:0007669"/>
    <property type="project" value="InterPro"/>
</dbReference>
<dbReference type="GO" id="GO:0009408">
    <property type="term" value="P:response to heat"/>
    <property type="evidence" value="ECO:0000315"/>
    <property type="project" value="UniProtKB"/>
</dbReference>
<dbReference type="GO" id="GO:0002926">
    <property type="term" value="P:tRNA wobble base 5-methoxycarbonylmethyl-2-thiouridinylation"/>
    <property type="evidence" value="ECO:0000315"/>
    <property type="project" value="UniProtKB"/>
</dbReference>
<dbReference type="GO" id="GO:0002143">
    <property type="term" value="P:tRNA wobble position uridine thiolation"/>
    <property type="evidence" value="ECO:0000315"/>
    <property type="project" value="UniProtKB"/>
</dbReference>
<dbReference type="CDD" id="cd01713">
    <property type="entry name" value="CTU1-like"/>
    <property type="match status" value="1"/>
</dbReference>
<dbReference type="Gene3D" id="3.40.50.620">
    <property type="entry name" value="HUPs"/>
    <property type="match status" value="1"/>
</dbReference>
<dbReference type="InterPro" id="IPR056369">
    <property type="entry name" value="CTU1-like_ATP-bd"/>
</dbReference>
<dbReference type="InterPro" id="IPR000541">
    <property type="entry name" value="Ncs6/Tuc1/Ctu1"/>
</dbReference>
<dbReference type="InterPro" id="IPR014729">
    <property type="entry name" value="Rossmann-like_a/b/a_fold"/>
</dbReference>
<dbReference type="InterPro" id="IPR011063">
    <property type="entry name" value="TilS/TtcA_N"/>
</dbReference>
<dbReference type="InterPro" id="IPR035107">
    <property type="entry name" value="tRNA_thiolation_TtcA_Ctu1"/>
</dbReference>
<dbReference type="InterPro" id="IPR054306">
    <property type="entry name" value="TtuA-like_LIM_N"/>
</dbReference>
<dbReference type="NCBIfam" id="TIGR00269">
    <property type="entry name" value="TIGR00269 family protein"/>
    <property type="match status" value="1"/>
</dbReference>
<dbReference type="NCBIfam" id="NF047749">
    <property type="entry name" value="tRNAThiolNcsA"/>
    <property type="match status" value="1"/>
</dbReference>
<dbReference type="PANTHER" id="PTHR11807">
    <property type="entry name" value="ATPASES OF THE PP SUPERFAMILY-RELATED"/>
    <property type="match status" value="1"/>
</dbReference>
<dbReference type="PANTHER" id="PTHR11807:SF12">
    <property type="entry name" value="CYTOPLASMIC TRNA 2-THIOLATION PROTEIN 1"/>
    <property type="match status" value="1"/>
</dbReference>
<dbReference type="Pfam" id="PF01171">
    <property type="entry name" value="ATP_bind_3"/>
    <property type="match status" value="1"/>
</dbReference>
<dbReference type="Pfam" id="PF22082">
    <property type="entry name" value="TtuA_LIM_N"/>
    <property type="match status" value="1"/>
</dbReference>
<dbReference type="PIRSF" id="PIRSF004976">
    <property type="entry name" value="ATPase_YdaO"/>
    <property type="match status" value="1"/>
</dbReference>
<dbReference type="SUPFAM" id="SSF52402">
    <property type="entry name" value="Adenine nucleotide alpha hydrolases-like"/>
    <property type="match status" value="1"/>
</dbReference>
<evidence type="ECO:0000269" key="1">
    <source>
    </source>
</evidence>
<evidence type="ECO:0000303" key="2">
    <source>
    </source>
</evidence>
<evidence type="ECO:0000305" key="3"/>
<evidence type="ECO:0000305" key="4">
    <source>
    </source>
</evidence>
<evidence type="ECO:0000312" key="5">
    <source>
        <dbReference type="EMBL" id="ADE04813.1"/>
    </source>
</evidence>
<evidence type="ECO:0000312" key="6">
    <source>
        <dbReference type="EMBL" id="ELY26159.1"/>
    </source>
</evidence>
<evidence type="ECO:0000312" key="7">
    <source>
        <dbReference type="Proteomes" id="UP000008243"/>
    </source>
</evidence>
<evidence type="ECO:0000312" key="8">
    <source>
        <dbReference type="Proteomes" id="UP000011532"/>
    </source>
</evidence>
<name>NCSA_HALVD</name>
<feature type="chain" id="PRO_0000454896" description="tRNA 2-thiolation protein NcsA">
    <location>
        <begin position="1"/>
        <end position="321"/>
    </location>
</feature>
<feature type="cross-link" description="Glycyl lysine isopeptide (Lys-Gly) (interchain with G-Cter in SAMP2)" evidence="1">
    <location>
        <position position="204"/>
    </location>
</feature>
<organism evidence="5">
    <name type="scientific">Haloferax volcanii (strain ATCC 29605 / DSM 3757 / JCM 8879 / NBRC 14742 / NCIMB 2012 / VKM B-1768 / DS2)</name>
    <name type="common">Halobacterium volcanii</name>
    <dbReference type="NCBI Taxonomy" id="309800"/>
    <lineage>
        <taxon>Archaea</taxon>
        <taxon>Methanobacteriati</taxon>
        <taxon>Methanobacteriota</taxon>
        <taxon>Stenosarchaea group</taxon>
        <taxon>Halobacteria</taxon>
        <taxon>Halobacteriales</taxon>
        <taxon>Haloferacaceae</taxon>
        <taxon>Haloferax</taxon>
    </lineage>
</organism>
<proteinExistence type="evidence at protein level"/>
<reference evidence="5 7" key="1">
    <citation type="journal article" date="2010" name="PLoS ONE">
        <title>The complete genome sequence of Haloferax volcanii DS2, a model archaeon.</title>
        <authorList>
            <person name="Hartman A.L."/>
            <person name="Norais C."/>
            <person name="Badger J.H."/>
            <person name="Delmas S."/>
            <person name="Haldenby S."/>
            <person name="Madupu R."/>
            <person name="Robinson J."/>
            <person name="Khouri H."/>
            <person name="Ren Q."/>
            <person name="Lowe T.M."/>
            <person name="Maupin-Furlow J."/>
            <person name="Pohlschroder M."/>
            <person name="Daniels C."/>
            <person name="Pfeiffer F."/>
            <person name="Allers T."/>
            <person name="Eisen J.A."/>
        </authorList>
    </citation>
    <scope>NUCLEOTIDE SEQUENCE [LARGE SCALE GENOMIC DNA]</scope>
    <source>
        <strain evidence="7">ATCC 29605 / DSM 3757 / JCM 8879 / NBRC 14742 / NCIMB 2012 / VKM B-1768 / DS2</strain>
    </source>
</reference>
<reference evidence="6 8" key="2">
    <citation type="journal article" date="2014" name="PLoS Genet.">
        <title>Phylogenetically driven sequencing of extremely halophilic archaea reveals strategies for static and dynamic osmo-response.</title>
        <authorList>
            <person name="Becker E.A."/>
            <person name="Seitzer P.M."/>
            <person name="Tritt A."/>
            <person name="Larsen D."/>
            <person name="Krusor M."/>
            <person name="Yao A.I."/>
            <person name="Wu D."/>
            <person name="Madern D."/>
            <person name="Eisen J.A."/>
            <person name="Darling A.E."/>
            <person name="Facciotti M.T."/>
        </authorList>
    </citation>
    <scope>NUCLEOTIDE SEQUENCE [LARGE SCALE GENOMIC DNA]</scope>
    <source>
        <strain evidence="8">ATCC 29605 / DSM 3757 / JCM 8879 / NBRC 14742 / NCIMB 2012 / VKM B-1768 / DS2</strain>
    </source>
</reference>
<reference key="3">
    <citation type="journal article" date="2014" name="PLoS ONE">
        <title>Archaeal Tuc1/Ncs6 homolog required for wobble uridine tRNA thiolation is associated with ubiquitin-proteasome, translation, and RNA processing system homologs.</title>
        <authorList>
            <person name="Chavarria N.E."/>
            <person name="Hwang S."/>
            <person name="Cao S."/>
            <person name="Fu X."/>
            <person name="Holman M."/>
            <person name="Elbanna D."/>
            <person name="Rodriguez S."/>
            <person name="Arrington D."/>
            <person name="Englert M."/>
            <person name="Uthandi S."/>
            <person name="Soell D."/>
            <person name="Maupin-Furlow J.A."/>
        </authorList>
    </citation>
    <scope>FUNCTION</scope>
    <scope>PATHWAY</scope>
    <scope>INTERACTION WITH CPSF1; EF-1-ALPHA; PAN1; SAMP2 AND UBAA</scope>
    <scope>SAMPYLATION AT LYS-204</scope>
    <scope>DISRUPTION PHENOTYPE</scope>
    <scope>PHYLOGENETIC ANALYSIS</scope>
    <source>
        <strain evidence="2">DS2 / DS70</strain>
    </source>
</reference>
<keyword id="KW-1017">Isopeptide bond</keyword>
<keyword id="KW-1185">Reference proteome</keyword>
<keyword id="KW-0808">Transferase</keyword>
<keyword id="KW-0819">tRNA processing</keyword>
<keyword id="KW-0832">Ubl conjugation</keyword>
<accession>D4GSH6</accession>
<accession>A0A384KU00</accession>
<accession>L9UMR4</accession>
<gene>
    <name evidence="2 5" type="primary">ncsA</name>
    <name evidence="5" type="synonym">tuc1</name>
    <name evidence="5" type="ordered locus">HVO_0580</name>
    <name evidence="6" type="ORF">C498_15825</name>
</gene>
<comment type="function">
    <text evidence="1">Required for thiolation of mcm(5)S(2)U at the wobble uridine position of tRNA specific for lysine (tRNA(Lys)). Probably acts by catalyzing adenylation of tRNA, an intermediate required for 2-thiolation. May also act as a sulfurtransferase that transfers sulfur from thiocarboxylated SAMP2 onto the uridine of tRNA at wobble position. Required for cell growth at elevated temperatures.</text>
</comment>
<comment type="pathway">
    <text evidence="1">tRNA modification; 5-methoxycarbonylmethyl-2-thiouridine-tRNA biosynthesis.</text>
</comment>
<comment type="subunit">
    <text evidence="1">Interacts with monomeric and polymeric forms of SAMP2. Interacts with UbaA. Interacts with archaeal EF-1-alpha and Pan1. Non-sampylated protein forms a complex with archaeal CPSF1 of approximately 100 kDa.</text>
</comment>
<comment type="PTM">
    <text evidence="1">Sampylated at Lys-204 with the archaeal ubiquitin-like protein SAMP2. Polymeric chains of SAMP2 are also linked.</text>
</comment>
<comment type="disruption phenotype">
    <text evidence="1">Cells lacking this gene are nonthiolated at the wobble uridine position of tRNA(Lys). No effect on cell growth or yield at 42 degrees Celsius. Transferring the cells grown at 42 degrees Celsius to 50 degrees Celsius results in a slow-growth phenotype.</text>
</comment>
<comment type="similarity">
    <text evidence="3">Belongs to the TtcA family. CTU1/NCS6/ATPBD3 subfamily.</text>
</comment>
<sequence length="321" mass="36158">MECDKCGRDAVMHAAYSGAHLCDDHFCASVEKRVRRRIREDNMLPRDASPENPQTWVIGLSGGKDSVVLTHILDDTFGRDPRIELVALTIHEGIEGYRDKSVDACVELAEDLDIHHELVTYEDEFGVQMDDVVEKDPENMAACAYCGVFRRDLLERFADELGADKLLTGHNLDDEAQTALMNFFEGDLKQVAKHFDASIGDFEKRRDAGEFIPRAKPLRDVPEKEVALYAHLKDLPAHITECPHSSEAYRGEIQQLLLKLEENHPGTRHSIMAGYEELAELTAREYRGEGRVDLNDCERCGSKTAGDVCRKCRLIESIEAV</sequence>
<protein>
    <recommendedName>
        <fullName evidence="2">tRNA 2-thiolation protein NcsA</fullName>
    </recommendedName>
    <alternativeName>
        <fullName evidence="6">N-type ATP pyrophosphatase superfamily protein</fullName>
    </alternativeName>
    <alternativeName>
        <fullName evidence="3">tRNA adenylyltransferase NcsA</fullName>
        <ecNumber evidence="4">2.7.7.-</ecNumber>
    </alternativeName>
</protein>